<keyword id="KW-0030">Aminoacyl-tRNA synthetase</keyword>
<keyword id="KW-0067">ATP-binding</keyword>
<keyword id="KW-0175">Coiled coil</keyword>
<keyword id="KW-0963">Cytoplasm</keyword>
<keyword id="KW-0436">Ligase</keyword>
<keyword id="KW-0547">Nucleotide-binding</keyword>
<keyword id="KW-0648">Protein biosynthesis</keyword>
<name>SYV_CHLFF</name>
<protein>
    <recommendedName>
        <fullName evidence="1">Valine--tRNA ligase</fullName>
        <ecNumber evidence="1">6.1.1.9</ecNumber>
    </recommendedName>
    <alternativeName>
        <fullName evidence="1">Valyl-tRNA synthetase</fullName>
        <shortName evidence="1">ValRS</shortName>
    </alternativeName>
</protein>
<reference key="1">
    <citation type="journal article" date="2006" name="DNA Res.">
        <title>Genome sequence of the cat pathogen, Chlamydophila felis.</title>
        <authorList>
            <person name="Azuma Y."/>
            <person name="Hirakawa H."/>
            <person name="Yamashita A."/>
            <person name="Cai Y."/>
            <person name="Rahman M.A."/>
            <person name="Suzuki H."/>
            <person name="Mitaku S."/>
            <person name="Toh H."/>
            <person name="Goto S."/>
            <person name="Murakami T."/>
            <person name="Sugi K."/>
            <person name="Hayashi H."/>
            <person name="Fukushi H."/>
            <person name="Hattori M."/>
            <person name="Kuhara S."/>
            <person name="Shirai M."/>
        </authorList>
    </citation>
    <scope>NUCLEOTIDE SEQUENCE [LARGE SCALE GENOMIC DNA]</scope>
    <source>
        <strain>Fe/C-56</strain>
    </source>
</reference>
<accession>Q255D3</accession>
<gene>
    <name evidence="1" type="primary">valS</name>
    <name type="ordered locus">CF0333</name>
</gene>
<feature type="chain" id="PRO_1000216261" description="Valine--tRNA ligase">
    <location>
        <begin position="1"/>
        <end position="940"/>
    </location>
</feature>
<feature type="coiled-coil region" evidence="1">
    <location>
        <begin position="872"/>
        <end position="938"/>
    </location>
</feature>
<feature type="short sequence motif" description="'HIGH' region">
    <location>
        <begin position="47"/>
        <end position="57"/>
    </location>
</feature>
<feature type="short sequence motif" description="'KMSKS' region">
    <location>
        <begin position="564"/>
        <end position="568"/>
    </location>
</feature>
<feature type="binding site" evidence="1">
    <location>
        <position position="567"/>
    </location>
    <ligand>
        <name>ATP</name>
        <dbReference type="ChEBI" id="CHEBI:30616"/>
    </ligand>
</feature>
<comment type="function">
    <text evidence="1">Catalyzes the attachment of valine to tRNA(Val). As ValRS can inadvertently accommodate and process structurally similar amino acids such as threonine, to avoid such errors, it has a 'posttransfer' editing activity that hydrolyzes mischarged Thr-tRNA(Val) in a tRNA-dependent manner.</text>
</comment>
<comment type="catalytic activity">
    <reaction evidence="1">
        <text>tRNA(Val) + L-valine + ATP = L-valyl-tRNA(Val) + AMP + diphosphate</text>
        <dbReference type="Rhea" id="RHEA:10704"/>
        <dbReference type="Rhea" id="RHEA-COMP:9672"/>
        <dbReference type="Rhea" id="RHEA-COMP:9708"/>
        <dbReference type="ChEBI" id="CHEBI:30616"/>
        <dbReference type="ChEBI" id="CHEBI:33019"/>
        <dbReference type="ChEBI" id="CHEBI:57762"/>
        <dbReference type="ChEBI" id="CHEBI:78442"/>
        <dbReference type="ChEBI" id="CHEBI:78537"/>
        <dbReference type="ChEBI" id="CHEBI:456215"/>
        <dbReference type="EC" id="6.1.1.9"/>
    </reaction>
</comment>
<comment type="subunit">
    <text evidence="1">Monomer.</text>
</comment>
<comment type="subcellular location">
    <subcellularLocation>
        <location evidence="1">Cytoplasm</location>
    </subcellularLocation>
</comment>
<comment type="domain">
    <text evidence="1">ValRS has two distinct active sites: one for aminoacylation and one for editing. The misactivated threonine is translocated from the active site to the editing site.</text>
</comment>
<comment type="domain">
    <text evidence="1">The C-terminal coiled-coil domain is crucial for aminoacylation activity.</text>
</comment>
<comment type="similarity">
    <text evidence="1">Belongs to the class-I aminoacyl-tRNA synthetase family. ValS type 1 subfamily.</text>
</comment>
<organism>
    <name type="scientific">Chlamydia felis (strain Fe/C-56)</name>
    <name type="common">Chlamydophila felis</name>
    <dbReference type="NCBI Taxonomy" id="264202"/>
    <lineage>
        <taxon>Bacteria</taxon>
        <taxon>Pseudomonadati</taxon>
        <taxon>Chlamydiota</taxon>
        <taxon>Chlamydiia</taxon>
        <taxon>Chlamydiales</taxon>
        <taxon>Chlamydiaceae</taxon>
        <taxon>Chlamydia/Chlamydophila group</taxon>
        <taxon>Chlamydia</taxon>
    </lineage>
</organism>
<evidence type="ECO:0000255" key="1">
    <source>
        <dbReference type="HAMAP-Rule" id="MF_02004"/>
    </source>
</evidence>
<dbReference type="EC" id="6.1.1.9" evidence="1"/>
<dbReference type="EMBL" id="AP006861">
    <property type="protein sequence ID" value="BAE81105.1"/>
    <property type="molecule type" value="Genomic_DNA"/>
</dbReference>
<dbReference type="RefSeq" id="WP_011457885.1">
    <property type="nucleotide sequence ID" value="NC_007899.1"/>
</dbReference>
<dbReference type="SMR" id="Q255D3"/>
<dbReference type="STRING" id="264202.CF0333"/>
<dbReference type="KEGG" id="cfe:CF0333"/>
<dbReference type="eggNOG" id="COG0525">
    <property type="taxonomic scope" value="Bacteria"/>
</dbReference>
<dbReference type="HOGENOM" id="CLU_001493_0_2_0"/>
<dbReference type="OrthoDB" id="9810365at2"/>
<dbReference type="Proteomes" id="UP000001260">
    <property type="component" value="Chromosome"/>
</dbReference>
<dbReference type="GO" id="GO:0005829">
    <property type="term" value="C:cytosol"/>
    <property type="evidence" value="ECO:0007669"/>
    <property type="project" value="TreeGrafter"/>
</dbReference>
<dbReference type="GO" id="GO:0002161">
    <property type="term" value="F:aminoacyl-tRNA deacylase activity"/>
    <property type="evidence" value="ECO:0007669"/>
    <property type="project" value="InterPro"/>
</dbReference>
<dbReference type="GO" id="GO:0005524">
    <property type="term" value="F:ATP binding"/>
    <property type="evidence" value="ECO:0007669"/>
    <property type="project" value="UniProtKB-UniRule"/>
</dbReference>
<dbReference type="GO" id="GO:0004832">
    <property type="term" value="F:valine-tRNA ligase activity"/>
    <property type="evidence" value="ECO:0007669"/>
    <property type="project" value="UniProtKB-UniRule"/>
</dbReference>
<dbReference type="GO" id="GO:0006438">
    <property type="term" value="P:valyl-tRNA aminoacylation"/>
    <property type="evidence" value="ECO:0007669"/>
    <property type="project" value="UniProtKB-UniRule"/>
</dbReference>
<dbReference type="CDD" id="cd07962">
    <property type="entry name" value="Anticodon_Ia_Val"/>
    <property type="match status" value="1"/>
</dbReference>
<dbReference type="CDD" id="cd00817">
    <property type="entry name" value="ValRS_core"/>
    <property type="match status" value="1"/>
</dbReference>
<dbReference type="FunFam" id="3.40.50.620:FF:000032">
    <property type="entry name" value="Valine--tRNA ligase"/>
    <property type="match status" value="1"/>
</dbReference>
<dbReference type="FunFam" id="3.40.50.620:FF:000306">
    <property type="entry name" value="Valine--tRNA ligase"/>
    <property type="match status" value="1"/>
</dbReference>
<dbReference type="FunFam" id="3.90.740.10:FF:000010">
    <property type="entry name" value="Valine--tRNA ligase"/>
    <property type="match status" value="1"/>
</dbReference>
<dbReference type="Gene3D" id="3.40.50.620">
    <property type="entry name" value="HUPs"/>
    <property type="match status" value="2"/>
</dbReference>
<dbReference type="Gene3D" id="1.10.730.10">
    <property type="entry name" value="Isoleucyl-tRNA Synthetase, Domain 1"/>
    <property type="match status" value="1"/>
</dbReference>
<dbReference type="Gene3D" id="1.10.287.380">
    <property type="entry name" value="Valyl-tRNA synthetase, C-terminal domain"/>
    <property type="match status" value="1"/>
</dbReference>
<dbReference type="Gene3D" id="3.90.740.10">
    <property type="entry name" value="Valyl/Leucyl/Isoleucyl-tRNA synthetase, editing domain"/>
    <property type="match status" value="1"/>
</dbReference>
<dbReference type="HAMAP" id="MF_02004">
    <property type="entry name" value="Val_tRNA_synth_type1"/>
    <property type="match status" value="1"/>
</dbReference>
<dbReference type="InterPro" id="IPR001412">
    <property type="entry name" value="aa-tRNA-synth_I_CS"/>
</dbReference>
<dbReference type="InterPro" id="IPR002300">
    <property type="entry name" value="aa-tRNA-synth_Ia"/>
</dbReference>
<dbReference type="InterPro" id="IPR033705">
    <property type="entry name" value="Anticodon_Ia_Val"/>
</dbReference>
<dbReference type="InterPro" id="IPR013155">
    <property type="entry name" value="M/V/L/I-tRNA-synth_anticd-bd"/>
</dbReference>
<dbReference type="InterPro" id="IPR014729">
    <property type="entry name" value="Rossmann-like_a/b/a_fold"/>
</dbReference>
<dbReference type="InterPro" id="IPR010978">
    <property type="entry name" value="tRNA-bd_arm"/>
</dbReference>
<dbReference type="InterPro" id="IPR009080">
    <property type="entry name" value="tRNAsynth_Ia_anticodon-bd"/>
</dbReference>
<dbReference type="InterPro" id="IPR037118">
    <property type="entry name" value="Val-tRNA_synth_C_sf"/>
</dbReference>
<dbReference type="InterPro" id="IPR009008">
    <property type="entry name" value="Val/Leu/Ile-tRNA-synth_edit"/>
</dbReference>
<dbReference type="InterPro" id="IPR002303">
    <property type="entry name" value="Valyl-tRNA_ligase"/>
</dbReference>
<dbReference type="NCBIfam" id="NF004349">
    <property type="entry name" value="PRK05729.1"/>
    <property type="match status" value="1"/>
</dbReference>
<dbReference type="NCBIfam" id="TIGR00422">
    <property type="entry name" value="valS"/>
    <property type="match status" value="1"/>
</dbReference>
<dbReference type="PANTHER" id="PTHR11946:SF93">
    <property type="entry name" value="VALINE--TRNA LIGASE, CHLOROPLASTIC_MITOCHONDRIAL 2"/>
    <property type="match status" value="1"/>
</dbReference>
<dbReference type="PANTHER" id="PTHR11946">
    <property type="entry name" value="VALYL-TRNA SYNTHETASES"/>
    <property type="match status" value="1"/>
</dbReference>
<dbReference type="Pfam" id="PF08264">
    <property type="entry name" value="Anticodon_1"/>
    <property type="match status" value="1"/>
</dbReference>
<dbReference type="Pfam" id="PF00133">
    <property type="entry name" value="tRNA-synt_1"/>
    <property type="match status" value="2"/>
</dbReference>
<dbReference type="PRINTS" id="PR00986">
    <property type="entry name" value="TRNASYNTHVAL"/>
</dbReference>
<dbReference type="SUPFAM" id="SSF47323">
    <property type="entry name" value="Anticodon-binding domain of a subclass of class I aminoacyl-tRNA synthetases"/>
    <property type="match status" value="1"/>
</dbReference>
<dbReference type="SUPFAM" id="SSF52374">
    <property type="entry name" value="Nucleotidylyl transferase"/>
    <property type="match status" value="1"/>
</dbReference>
<dbReference type="SUPFAM" id="SSF46589">
    <property type="entry name" value="tRNA-binding arm"/>
    <property type="match status" value="1"/>
</dbReference>
<dbReference type="SUPFAM" id="SSF50677">
    <property type="entry name" value="ValRS/IleRS/LeuRS editing domain"/>
    <property type="match status" value="1"/>
</dbReference>
<dbReference type="PROSITE" id="PS00178">
    <property type="entry name" value="AA_TRNA_LIGASE_I"/>
    <property type="match status" value="1"/>
</dbReference>
<sequence length="940" mass="107117">MEEDVFPKAYDPKGLEDKLYAFWEDAGMFTAQSASNKPPYAIIMPPPNVTGILHMGHALVNTLQDVLIRYKRMSGFEVCWVPGTDHAGIATQTVVERHLYSSLGKRRIDFSREEFLEYVWEWKEKSEGIILSQLRQLGCSCDWSRLRFTMEPLASRAVKKAFKVLFDRGHIYRGYYLVNWDPVLQTALADDEVEYEEKDGWLYYIRYRVVDSSDEIIVATTRPETLLGDTAIAISPDDERYSHLLGAKVHLPFVDREIPIIGDMSVDPLFGTGAVKITPAHDRDDYRTGINHNLPLVNILTPTGKINENGGIFAGLSKEKARDDIITALDAMGLFVKKEPYTLRVGVSYRSGAVIEPYLSKQWFVSVDSFRDSLREFVASDSIKIFPPEFTRNYLSWVNNLRDWCISRQLWWGHRIPVWYHKSDEDRIICYDGEGLPEEVAQDPDSWDQDPDVLDTWFSSGLWPLTCLGWPDVEAKDLKKFYPTSVLITGHDILFFWVTRMVLLCSAMVGEKPFSDVFLHGLIFGKSYKRYNNLGEWTYISGEEKHAYDMGKPLPKDVTAKWEKLSKSKGNVIDPLEMIDKYGADAVRMALCSCANRGEQIDLDYRLFEEYKNFANKIWNGARFIFGHISNLTGKDLADGINQNLLGLEDYYILDGFNRLLKELESAYQSYAFDRVTTMAYEFFRNDFCSTYIEIIKPTLYGKQGNDEDRLTKQKLLAVLLVNILGVLHPIAPFVTETLFLKLKEAIGVIVDASSDEITAHALNMLRADSYVLAPYPQAMRITIPDNLHASFALAERLVYTIRNIRGEMQLDPRASLEAFVICPEGVSVDTYVPMMCALGGLSSVEHLTEEPKDRVYSLGVVEGIRLGVFVPIEQITKEKNRLEKEKIRLEKAIESVSRLLGSENFRAKANPDLVSAKEEALKNNRMELQSILDKLASFS</sequence>
<proteinExistence type="inferred from homology"/>